<proteinExistence type="predicted"/>
<evidence type="ECO:0000255" key="1"/>
<evidence type="ECO:0000256" key="2">
    <source>
        <dbReference type="SAM" id="MobiDB-lite"/>
    </source>
</evidence>
<reference key="1">
    <citation type="journal article" date="2002" name="Nature">
        <title>Sequence and analysis of chromosome 2 of Dictyostelium discoideum.</title>
        <authorList>
            <person name="Gloeckner G."/>
            <person name="Eichinger L."/>
            <person name="Szafranski K."/>
            <person name="Pachebat J.A."/>
            <person name="Bankier A.T."/>
            <person name="Dear P.H."/>
            <person name="Lehmann R."/>
            <person name="Baumgart C."/>
            <person name="Parra G."/>
            <person name="Abril J.F."/>
            <person name="Guigo R."/>
            <person name="Kumpf K."/>
            <person name="Tunggal B."/>
            <person name="Cox E.C."/>
            <person name="Quail M.A."/>
            <person name="Platzer M."/>
            <person name="Rosenthal A."/>
            <person name="Noegel A.A."/>
        </authorList>
    </citation>
    <scope>NUCLEOTIDE SEQUENCE [LARGE SCALE GENOMIC DNA]</scope>
    <source>
        <strain>AX4</strain>
    </source>
</reference>
<reference key="2">
    <citation type="journal article" date="2005" name="Nature">
        <title>The genome of the social amoeba Dictyostelium discoideum.</title>
        <authorList>
            <person name="Eichinger L."/>
            <person name="Pachebat J.A."/>
            <person name="Gloeckner G."/>
            <person name="Rajandream M.A."/>
            <person name="Sucgang R."/>
            <person name="Berriman M."/>
            <person name="Song J."/>
            <person name="Olsen R."/>
            <person name="Szafranski K."/>
            <person name="Xu Q."/>
            <person name="Tunggal B."/>
            <person name="Kummerfeld S."/>
            <person name="Madera M."/>
            <person name="Konfortov B.A."/>
            <person name="Rivero F."/>
            <person name="Bankier A.T."/>
            <person name="Lehmann R."/>
            <person name="Hamlin N."/>
            <person name="Davies R."/>
            <person name="Gaudet P."/>
            <person name="Fey P."/>
            <person name="Pilcher K."/>
            <person name="Chen G."/>
            <person name="Saunders D."/>
            <person name="Sodergren E.J."/>
            <person name="Davis P."/>
            <person name="Kerhornou A."/>
            <person name="Nie X."/>
            <person name="Hall N."/>
            <person name="Anjard C."/>
            <person name="Hemphill L."/>
            <person name="Bason N."/>
            <person name="Farbrother P."/>
            <person name="Desany B."/>
            <person name="Just E."/>
            <person name="Morio T."/>
            <person name="Rost R."/>
            <person name="Churcher C.M."/>
            <person name="Cooper J."/>
            <person name="Haydock S."/>
            <person name="van Driessche N."/>
            <person name="Cronin A."/>
            <person name="Goodhead I."/>
            <person name="Muzny D.M."/>
            <person name="Mourier T."/>
            <person name="Pain A."/>
            <person name="Lu M."/>
            <person name="Harper D."/>
            <person name="Lindsay R."/>
            <person name="Hauser H."/>
            <person name="James K.D."/>
            <person name="Quiles M."/>
            <person name="Madan Babu M."/>
            <person name="Saito T."/>
            <person name="Buchrieser C."/>
            <person name="Wardroper A."/>
            <person name="Felder M."/>
            <person name="Thangavelu M."/>
            <person name="Johnson D."/>
            <person name="Knights A."/>
            <person name="Loulseged H."/>
            <person name="Mungall K.L."/>
            <person name="Oliver K."/>
            <person name="Price C."/>
            <person name="Quail M.A."/>
            <person name="Urushihara H."/>
            <person name="Hernandez J."/>
            <person name="Rabbinowitsch E."/>
            <person name="Steffen D."/>
            <person name="Sanders M."/>
            <person name="Ma J."/>
            <person name="Kohara Y."/>
            <person name="Sharp S."/>
            <person name="Simmonds M.N."/>
            <person name="Spiegler S."/>
            <person name="Tivey A."/>
            <person name="Sugano S."/>
            <person name="White B."/>
            <person name="Walker D."/>
            <person name="Woodward J.R."/>
            <person name="Winckler T."/>
            <person name="Tanaka Y."/>
            <person name="Shaulsky G."/>
            <person name="Schleicher M."/>
            <person name="Weinstock G.M."/>
            <person name="Rosenthal A."/>
            <person name="Cox E.C."/>
            <person name="Chisholm R.L."/>
            <person name="Gibbs R.A."/>
            <person name="Loomis W.F."/>
            <person name="Platzer M."/>
            <person name="Kay R.R."/>
            <person name="Williams J.G."/>
            <person name="Dear P.H."/>
            <person name="Noegel A.A."/>
            <person name="Barrell B.G."/>
            <person name="Kuspa A."/>
        </authorList>
    </citation>
    <scope>NUCLEOTIDE SEQUENCE [LARGE SCALE GENOMIC DNA]</scope>
    <source>
        <strain>AX4</strain>
    </source>
</reference>
<keyword id="KW-0175">Coiled coil</keyword>
<keyword id="KW-0880">Kelch repeat</keyword>
<keyword id="KW-1185">Reference proteome</keyword>
<keyword id="KW-0677">Repeat</keyword>
<organism>
    <name type="scientific">Dictyostelium discoideum</name>
    <name type="common">Social amoeba</name>
    <dbReference type="NCBI Taxonomy" id="44689"/>
    <lineage>
        <taxon>Eukaryota</taxon>
        <taxon>Amoebozoa</taxon>
        <taxon>Evosea</taxon>
        <taxon>Eumycetozoa</taxon>
        <taxon>Dictyostelia</taxon>
        <taxon>Dictyosteliales</taxon>
        <taxon>Dictyosteliaceae</taxon>
        <taxon>Dictyostelium</taxon>
    </lineage>
</organism>
<protein>
    <recommendedName>
        <fullName>Kelch repeat-containing protein DDB_G0274267</fullName>
    </recommendedName>
</protein>
<accession>Q86J11</accession>
<accession>C7FZZ1</accession>
<accession>Q555T8</accession>
<accession>Q555T9</accession>
<accession>Q86J10</accession>
<gene>
    <name type="ORF">DDB_G0274267</name>
</gene>
<sequence length="667" mass="75621">MIENEEFKNLNDHWRNTIEKLSIYKDISEQTLERCDESFIETKKKICQDFDTIINYLTDRKIELLQQLGEELEAHKQQIESNRDKSMMLIEQLNKKMNSPSKFDININSSGGGGSGGVVFSGGGGGGLSHSTSYSGNLSNYLSASSGFASSPLNYSTSSLMVTNNNNNNPMTSPLKKSTSFQTDYLQVLKESISYIEWDWKDEFQENNTTNRKIIKQPKPISSMASDLILNSSFKSFDDLNKKFQEFSNNNDDTDDYDNNNNNNNDNKDDFDNCENNNNGDSLKMKSNKKLKIFGKLKFKIIETLEYKRLNSNLEDTKCIYSIGGKCKDGFDQYSIEKFDFKQGLWRSLQSIPSIMDNDFTGNFDGKNHIYLFGGSLQPTRILKYNLLEDQWEIIETNNNNNNNNNGANGANGNIEIPDNGRFLHCSVFDGKQNIYLIGGFPRSTSILKFNIITEQFSKQQSKSTTSSRNLWSMGAIYKEDNNSIYLIGGCNITRQSVDTLERYDIDNDSFTTLSPLPVSCYGAGVFYDDQEHYIYVLGGYNSKENKCLSIIQRYDLLDNSWSVLTNNHDDDDDDDGDSGGGLQNLLLPKPMMINGNSIIFDSSKRIVHILGGYNNVTKESIDDIYTLDISNILDENLSNKINWEVNKIPQFKNSKFKGGTSILVQK</sequence>
<dbReference type="EMBL" id="AAFI02000012">
    <property type="protein sequence ID" value="EEU04128.1"/>
    <property type="molecule type" value="Genomic_DNA"/>
</dbReference>
<dbReference type="RefSeq" id="XP_002649180.2">
    <property type="nucleotide sequence ID" value="XM_002649134.1"/>
</dbReference>
<dbReference type="SMR" id="Q86J11"/>
<dbReference type="STRING" id="44689.Q86J11"/>
<dbReference type="PaxDb" id="44689-DDB0304412"/>
<dbReference type="GeneID" id="8619398"/>
<dbReference type="KEGG" id="ddi:DDB_G0274267"/>
<dbReference type="dictyBase" id="DDB_G0274267"/>
<dbReference type="VEuPathDB" id="AmoebaDB:DDB_G0274267"/>
<dbReference type="eggNOG" id="ENOG502RI24">
    <property type="taxonomic scope" value="Eukaryota"/>
</dbReference>
<dbReference type="HOGENOM" id="CLU_411867_0_0_1"/>
<dbReference type="InParanoid" id="Q86J11"/>
<dbReference type="OMA" id="MDNDFTS"/>
<dbReference type="PRO" id="PR:Q86J11"/>
<dbReference type="Proteomes" id="UP000002195">
    <property type="component" value="Chromosome 2"/>
</dbReference>
<dbReference type="Gene3D" id="2.120.10.80">
    <property type="entry name" value="Kelch-type beta propeller"/>
    <property type="match status" value="1"/>
</dbReference>
<dbReference type="InterPro" id="IPR056737">
    <property type="entry name" value="Beta-prop_ATRN-MKLN-like"/>
</dbReference>
<dbReference type="InterPro" id="IPR011043">
    <property type="entry name" value="Gal_Oxase/kelch_b-propeller"/>
</dbReference>
<dbReference type="InterPro" id="IPR015915">
    <property type="entry name" value="Kelch-typ_b-propeller"/>
</dbReference>
<dbReference type="InterPro" id="IPR006652">
    <property type="entry name" value="Kelch_1"/>
</dbReference>
<dbReference type="InterPro" id="IPR051746">
    <property type="entry name" value="Kelch_domain_containing_8"/>
</dbReference>
<dbReference type="PANTHER" id="PTHR46260">
    <property type="entry name" value="RING-TYPE DOMAIN-CONTAINING PROTEIN"/>
    <property type="match status" value="1"/>
</dbReference>
<dbReference type="PANTHER" id="PTHR46260:SF3">
    <property type="entry name" value="RING-TYPE DOMAIN-CONTAINING PROTEIN"/>
    <property type="match status" value="1"/>
</dbReference>
<dbReference type="Pfam" id="PF24981">
    <property type="entry name" value="Beta-prop_ATRN-LZTR1"/>
    <property type="match status" value="1"/>
</dbReference>
<dbReference type="SMART" id="SM00612">
    <property type="entry name" value="Kelch"/>
    <property type="match status" value="2"/>
</dbReference>
<dbReference type="SUPFAM" id="SSF50965">
    <property type="entry name" value="Galactose oxidase, central domain"/>
    <property type="match status" value="1"/>
</dbReference>
<dbReference type="SUPFAM" id="SSF117281">
    <property type="entry name" value="Kelch motif"/>
    <property type="match status" value="1"/>
</dbReference>
<feature type="chain" id="PRO_0000364031" description="Kelch repeat-containing protein DDB_G0274267">
    <location>
        <begin position="1"/>
        <end position="667"/>
    </location>
</feature>
<feature type="repeat" description="Kelch 1">
    <location>
        <begin position="319"/>
        <end position="366"/>
    </location>
</feature>
<feature type="repeat" description="Kelch 2">
    <location>
        <begin position="369"/>
        <end position="412"/>
    </location>
</feature>
<feature type="repeat" description="Kelch 3">
    <location>
        <begin position="434"/>
        <end position="480"/>
    </location>
</feature>
<feature type="repeat" description="Kelch 4">
    <location>
        <begin position="484"/>
        <end position="531"/>
    </location>
</feature>
<feature type="repeat" description="Kelch 5">
    <location>
        <begin position="534"/>
        <end position="582"/>
    </location>
</feature>
<feature type="repeat" description="Kelch 6">
    <location>
        <begin position="607"/>
        <end position="654"/>
    </location>
</feature>
<feature type="region of interest" description="Disordered" evidence="2">
    <location>
        <begin position="248"/>
        <end position="281"/>
    </location>
</feature>
<feature type="coiled-coil region" evidence="1">
    <location>
        <begin position="58"/>
        <end position="98"/>
    </location>
</feature>
<name>Y4267_DICDI</name>